<protein>
    <recommendedName>
        <fullName evidence="1">Deoxyguanosinetriphosphate triphosphohydrolase-like protein</fullName>
    </recommendedName>
</protein>
<keyword id="KW-0378">Hydrolase</keyword>
<keyword id="KW-1185">Reference proteome</keyword>
<organism>
    <name type="scientific">Mycobacterium bovis (strain ATCC BAA-935 / AF2122/97)</name>
    <dbReference type="NCBI Taxonomy" id="233413"/>
    <lineage>
        <taxon>Bacteria</taxon>
        <taxon>Bacillati</taxon>
        <taxon>Actinomycetota</taxon>
        <taxon>Actinomycetes</taxon>
        <taxon>Mycobacteriales</taxon>
        <taxon>Mycobacteriaceae</taxon>
        <taxon>Mycobacterium</taxon>
        <taxon>Mycobacterium tuberculosis complex</taxon>
    </lineage>
</organism>
<name>DGTL1_MYCBO</name>
<sequence>MSASEHDPYDDFDRQRRVAEAPKTAGLPGTEGQYRSDFARDRARVLHSAALRRLADKTQVVGPREGDTPRTRLTHSLEVAQIGRGMAIGLGCDLDLVELAGLAHDIGHPPYGHNGERALDEVAASHGGFEGNAQNFRILTSLEPKVVDAQGLSAGLNLTRASLDAVTKYPWMRGDGLGSQRRKFGFYDDDRESAVWVRQGAPPERACLEAQVMDWADDVAYSVHDVEDGVVSERIDLRVLAAEEDAAALARLGEREFSRVSADELMAAARRLSRLPVVAAVGKYDATLSASVALKRLTSELVGRFASAAIATTRAAAGPGPLVRFRADLQVPDLVRAEVAVLKILALQFIMSDPRHLETQARQRERIHRVAHRLYSGAPQTLDPVYAAAFNTAADDAARLRVVVDQIASYTEGRLERIDADQLGVSRNALD</sequence>
<accession>P0A541</accession>
<accession>A0A1R3Y1Q8</accession>
<accession>P95240</accession>
<accession>X2BKT4</accession>
<gene>
    <name type="primary">dgt</name>
    <name type="ordered locus">BQ2027_MB2373C</name>
</gene>
<comment type="similarity">
    <text evidence="1">Belongs to the dGTPase family. Type 2 subfamily.</text>
</comment>
<dbReference type="EMBL" id="LT708304">
    <property type="protein sequence ID" value="SIU00985.1"/>
    <property type="molecule type" value="Genomic_DNA"/>
</dbReference>
<dbReference type="RefSeq" id="NP_856022.1">
    <property type="nucleotide sequence ID" value="NC_002945.3"/>
</dbReference>
<dbReference type="RefSeq" id="WP_003899281.1">
    <property type="nucleotide sequence ID" value="NC_002945.4"/>
</dbReference>
<dbReference type="SMR" id="P0A541"/>
<dbReference type="KEGG" id="mbo:BQ2027_MB2373C"/>
<dbReference type="PATRIC" id="fig|233413.5.peg.2605"/>
<dbReference type="Proteomes" id="UP000001419">
    <property type="component" value="Chromosome"/>
</dbReference>
<dbReference type="GO" id="GO:0008832">
    <property type="term" value="F:dGTPase activity"/>
    <property type="evidence" value="ECO:0007669"/>
    <property type="project" value="TreeGrafter"/>
</dbReference>
<dbReference type="GO" id="GO:0006203">
    <property type="term" value="P:dGTP catabolic process"/>
    <property type="evidence" value="ECO:0007669"/>
    <property type="project" value="TreeGrafter"/>
</dbReference>
<dbReference type="CDD" id="cd00077">
    <property type="entry name" value="HDc"/>
    <property type="match status" value="1"/>
</dbReference>
<dbReference type="FunFam" id="1.10.3210.10:FF:000029">
    <property type="entry name" value="Deoxyguanosinetriphosphate triphosphohydrolase-like protein"/>
    <property type="match status" value="1"/>
</dbReference>
<dbReference type="Gene3D" id="1.10.3210.10">
    <property type="entry name" value="Hypothetical protein af1432"/>
    <property type="match status" value="1"/>
</dbReference>
<dbReference type="HAMAP" id="MF_01212">
    <property type="entry name" value="dGTPase_type2"/>
    <property type="match status" value="1"/>
</dbReference>
<dbReference type="InterPro" id="IPR006261">
    <property type="entry name" value="dGTPase"/>
</dbReference>
<dbReference type="InterPro" id="IPR050135">
    <property type="entry name" value="dGTPase-like"/>
</dbReference>
<dbReference type="InterPro" id="IPR023023">
    <property type="entry name" value="dNTPase_2"/>
</dbReference>
<dbReference type="InterPro" id="IPR003607">
    <property type="entry name" value="HD/PDEase_dom"/>
</dbReference>
<dbReference type="InterPro" id="IPR006674">
    <property type="entry name" value="HD_domain"/>
</dbReference>
<dbReference type="InterPro" id="IPR026875">
    <property type="entry name" value="PHydrolase_assoc_dom"/>
</dbReference>
<dbReference type="NCBIfam" id="TIGR01353">
    <property type="entry name" value="dGTP_triPase"/>
    <property type="match status" value="1"/>
</dbReference>
<dbReference type="NCBIfam" id="NF002829">
    <property type="entry name" value="PRK03007.1"/>
    <property type="match status" value="1"/>
</dbReference>
<dbReference type="PANTHER" id="PTHR11373:SF32">
    <property type="entry name" value="DEOXYGUANOSINETRIPHOSPHATE TRIPHOSPHOHYDROLASE"/>
    <property type="match status" value="1"/>
</dbReference>
<dbReference type="PANTHER" id="PTHR11373">
    <property type="entry name" value="DEOXYNUCLEOSIDE TRIPHOSPHATE TRIPHOSPHOHYDROLASE"/>
    <property type="match status" value="1"/>
</dbReference>
<dbReference type="Pfam" id="PF01966">
    <property type="entry name" value="HD"/>
    <property type="match status" value="1"/>
</dbReference>
<dbReference type="Pfam" id="PF13286">
    <property type="entry name" value="HD_assoc"/>
    <property type="match status" value="1"/>
</dbReference>
<dbReference type="SMART" id="SM00471">
    <property type="entry name" value="HDc"/>
    <property type="match status" value="1"/>
</dbReference>
<dbReference type="SUPFAM" id="SSF109604">
    <property type="entry name" value="HD-domain/PDEase-like"/>
    <property type="match status" value="1"/>
</dbReference>
<dbReference type="PROSITE" id="PS51831">
    <property type="entry name" value="HD"/>
    <property type="match status" value="1"/>
</dbReference>
<proteinExistence type="inferred from homology"/>
<reference key="1">
    <citation type="journal article" date="2003" name="Proc. Natl. Acad. Sci. U.S.A.">
        <title>The complete genome sequence of Mycobacterium bovis.</title>
        <authorList>
            <person name="Garnier T."/>
            <person name="Eiglmeier K."/>
            <person name="Camus J.-C."/>
            <person name="Medina N."/>
            <person name="Mansoor H."/>
            <person name="Pryor M."/>
            <person name="Duthoy S."/>
            <person name="Grondin S."/>
            <person name="Lacroix C."/>
            <person name="Monsempe C."/>
            <person name="Simon S."/>
            <person name="Harris B."/>
            <person name="Atkin R."/>
            <person name="Doggett J."/>
            <person name="Mayes R."/>
            <person name="Keating L."/>
            <person name="Wheeler P.R."/>
            <person name="Parkhill J."/>
            <person name="Barrell B.G."/>
            <person name="Cole S.T."/>
            <person name="Gordon S.V."/>
            <person name="Hewinson R.G."/>
        </authorList>
    </citation>
    <scope>NUCLEOTIDE SEQUENCE [LARGE SCALE GENOMIC DNA]</scope>
    <source>
        <strain>ATCC BAA-935 / AF2122/97</strain>
    </source>
</reference>
<reference key="2">
    <citation type="journal article" date="2017" name="Genome Announc.">
        <title>Updated reference genome sequence and annotation of Mycobacterium bovis AF2122/97.</title>
        <authorList>
            <person name="Malone K.M."/>
            <person name="Farrell D."/>
            <person name="Stuber T.P."/>
            <person name="Schubert O.T."/>
            <person name="Aebersold R."/>
            <person name="Robbe-Austerman S."/>
            <person name="Gordon S.V."/>
        </authorList>
    </citation>
    <scope>NUCLEOTIDE SEQUENCE [LARGE SCALE GENOMIC DNA]</scope>
    <scope>GENOME REANNOTATION</scope>
    <source>
        <strain>ATCC BAA-935 / AF2122/97</strain>
    </source>
</reference>
<feature type="chain" id="PRO_0000205307" description="Deoxyguanosinetriphosphate triphosphohydrolase-like protein">
    <location>
        <begin position="1"/>
        <end position="431"/>
    </location>
</feature>
<feature type="domain" description="HD" evidence="2">
    <location>
        <begin position="72"/>
        <end position="222"/>
    </location>
</feature>
<feature type="region of interest" description="Disordered" evidence="3">
    <location>
        <begin position="1"/>
        <end position="36"/>
    </location>
</feature>
<feature type="compositionally biased region" description="Basic and acidic residues" evidence="3">
    <location>
        <begin position="1"/>
        <end position="20"/>
    </location>
</feature>
<evidence type="ECO:0000255" key="1">
    <source>
        <dbReference type="HAMAP-Rule" id="MF_01212"/>
    </source>
</evidence>
<evidence type="ECO:0000255" key="2">
    <source>
        <dbReference type="PROSITE-ProRule" id="PRU01175"/>
    </source>
</evidence>
<evidence type="ECO:0000256" key="3">
    <source>
        <dbReference type="SAM" id="MobiDB-lite"/>
    </source>
</evidence>